<sequence>MFDVTLLILLGLAALGFISHNTTVAVSILVLIIVRVTPLSTFFPWIEKQGLSIGIIILTIGIMAPIASGTLPPSTLIHSFLNWKSLVAIAVGVIVSWLGGRGVTLMGSQPQLVAGLLVGTVLGVALFRGVPVGPLIAAGLVSLIVGKQ</sequence>
<protein>
    <recommendedName>
        <fullName evidence="1">UPF0756 membrane protein YeaL</fullName>
    </recommendedName>
</protein>
<accession>B7USG9</accession>
<keyword id="KW-1003">Cell membrane</keyword>
<keyword id="KW-0472">Membrane</keyword>
<keyword id="KW-1185">Reference proteome</keyword>
<keyword id="KW-0812">Transmembrane</keyword>
<keyword id="KW-1133">Transmembrane helix</keyword>
<gene>
    <name evidence="1" type="primary">yeaL</name>
    <name type="ordered locus">E2348C_1916</name>
</gene>
<proteinExistence type="inferred from homology"/>
<organism>
    <name type="scientific">Escherichia coli O127:H6 (strain E2348/69 / EPEC)</name>
    <dbReference type="NCBI Taxonomy" id="574521"/>
    <lineage>
        <taxon>Bacteria</taxon>
        <taxon>Pseudomonadati</taxon>
        <taxon>Pseudomonadota</taxon>
        <taxon>Gammaproteobacteria</taxon>
        <taxon>Enterobacterales</taxon>
        <taxon>Enterobacteriaceae</taxon>
        <taxon>Escherichia</taxon>
    </lineage>
</organism>
<dbReference type="EMBL" id="FM180568">
    <property type="protein sequence ID" value="CAS09464.1"/>
    <property type="molecule type" value="Genomic_DNA"/>
</dbReference>
<dbReference type="RefSeq" id="WP_000460700.1">
    <property type="nucleotide sequence ID" value="NC_011601.1"/>
</dbReference>
<dbReference type="KEGG" id="ecg:E2348C_1916"/>
<dbReference type="HOGENOM" id="CLU_125889_0_0_6"/>
<dbReference type="Proteomes" id="UP000008205">
    <property type="component" value="Chromosome"/>
</dbReference>
<dbReference type="GO" id="GO:0005886">
    <property type="term" value="C:plasma membrane"/>
    <property type="evidence" value="ECO:0007669"/>
    <property type="project" value="UniProtKB-SubCell"/>
</dbReference>
<dbReference type="HAMAP" id="MF_01874">
    <property type="entry name" value="UPF0756"/>
    <property type="match status" value="1"/>
</dbReference>
<dbReference type="InterPro" id="IPR007382">
    <property type="entry name" value="UPF0756_TM"/>
</dbReference>
<dbReference type="PANTHER" id="PTHR38452">
    <property type="entry name" value="UPF0756 MEMBRANE PROTEIN YEAL"/>
    <property type="match status" value="1"/>
</dbReference>
<dbReference type="PANTHER" id="PTHR38452:SF1">
    <property type="entry name" value="UPF0756 MEMBRANE PROTEIN YEAL"/>
    <property type="match status" value="1"/>
</dbReference>
<dbReference type="Pfam" id="PF04284">
    <property type="entry name" value="DUF441"/>
    <property type="match status" value="1"/>
</dbReference>
<name>YEAL_ECO27</name>
<reference key="1">
    <citation type="journal article" date="2009" name="J. Bacteriol.">
        <title>Complete genome sequence and comparative genome analysis of enteropathogenic Escherichia coli O127:H6 strain E2348/69.</title>
        <authorList>
            <person name="Iguchi A."/>
            <person name="Thomson N.R."/>
            <person name="Ogura Y."/>
            <person name="Saunders D."/>
            <person name="Ooka T."/>
            <person name="Henderson I.R."/>
            <person name="Harris D."/>
            <person name="Asadulghani M."/>
            <person name="Kurokawa K."/>
            <person name="Dean P."/>
            <person name="Kenny B."/>
            <person name="Quail M.A."/>
            <person name="Thurston S."/>
            <person name="Dougan G."/>
            <person name="Hayashi T."/>
            <person name="Parkhill J."/>
            <person name="Frankel G."/>
        </authorList>
    </citation>
    <scope>NUCLEOTIDE SEQUENCE [LARGE SCALE GENOMIC DNA]</scope>
    <source>
        <strain>E2348/69 / EPEC</strain>
    </source>
</reference>
<evidence type="ECO:0000255" key="1">
    <source>
        <dbReference type="HAMAP-Rule" id="MF_01874"/>
    </source>
</evidence>
<comment type="subcellular location">
    <subcellularLocation>
        <location evidence="1">Cell membrane</location>
        <topology evidence="1">Multi-pass membrane protein</topology>
    </subcellularLocation>
</comment>
<comment type="similarity">
    <text evidence="1">Belongs to the UPF0756 family.</text>
</comment>
<feature type="chain" id="PRO_0000388862" description="UPF0756 membrane protein YeaL">
    <location>
        <begin position="1"/>
        <end position="148"/>
    </location>
</feature>
<feature type="transmembrane region" description="Helical" evidence="1">
    <location>
        <begin position="14"/>
        <end position="34"/>
    </location>
</feature>
<feature type="transmembrane region" description="Helical" evidence="1">
    <location>
        <begin position="51"/>
        <end position="71"/>
    </location>
</feature>
<feature type="transmembrane region" description="Helical" evidence="1">
    <location>
        <begin position="86"/>
        <end position="106"/>
    </location>
</feature>
<feature type="transmembrane region" description="Helical" evidence="1">
    <location>
        <begin position="121"/>
        <end position="141"/>
    </location>
</feature>